<dbReference type="EC" id="2.7.8.7" evidence="1"/>
<dbReference type="EMBL" id="CP001127">
    <property type="protein sequence ID" value="ACF91285.1"/>
    <property type="molecule type" value="Genomic_DNA"/>
</dbReference>
<dbReference type="RefSeq" id="WP_000986043.1">
    <property type="nucleotide sequence ID" value="NC_011094.1"/>
</dbReference>
<dbReference type="SMR" id="B4TS10"/>
<dbReference type="GeneID" id="66757004"/>
<dbReference type="KEGG" id="sew:SeSA_A2820"/>
<dbReference type="HOGENOM" id="CLU_089696_3_1_6"/>
<dbReference type="Proteomes" id="UP000001865">
    <property type="component" value="Chromosome"/>
</dbReference>
<dbReference type="GO" id="GO:0005737">
    <property type="term" value="C:cytoplasm"/>
    <property type="evidence" value="ECO:0007669"/>
    <property type="project" value="UniProtKB-SubCell"/>
</dbReference>
<dbReference type="GO" id="GO:0008897">
    <property type="term" value="F:holo-[acyl-carrier-protein] synthase activity"/>
    <property type="evidence" value="ECO:0007669"/>
    <property type="project" value="UniProtKB-UniRule"/>
</dbReference>
<dbReference type="GO" id="GO:0000287">
    <property type="term" value="F:magnesium ion binding"/>
    <property type="evidence" value="ECO:0007669"/>
    <property type="project" value="UniProtKB-UniRule"/>
</dbReference>
<dbReference type="GO" id="GO:0006633">
    <property type="term" value="P:fatty acid biosynthetic process"/>
    <property type="evidence" value="ECO:0007669"/>
    <property type="project" value="UniProtKB-UniRule"/>
</dbReference>
<dbReference type="FunFam" id="3.90.470.20:FF:000001">
    <property type="entry name" value="Holo-[acyl-carrier-protein] synthase"/>
    <property type="match status" value="1"/>
</dbReference>
<dbReference type="Gene3D" id="3.90.470.20">
    <property type="entry name" value="4'-phosphopantetheinyl transferase domain"/>
    <property type="match status" value="1"/>
</dbReference>
<dbReference type="HAMAP" id="MF_00101">
    <property type="entry name" value="AcpS"/>
    <property type="match status" value="1"/>
</dbReference>
<dbReference type="InterPro" id="IPR008278">
    <property type="entry name" value="4-PPantetheinyl_Trfase_dom"/>
</dbReference>
<dbReference type="InterPro" id="IPR037143">
    <property type="entry name" value="4-PPantetheinyl_Trfase_dom_sf"/>
</dbReference>
<dbReference type="InterPro" id="IPR002582">
    <property type="entry name" value="ACPS"/>
</dbReference>
<dbReference type="InterPro" id="IPR004568">
    <property type="entry name" value="Ppantetheine-prot_Trfase_dom"/>
</dbReference>
<dbReference type="NCBIfam" id="TIGR00516">
    <property type="entry name" value="acpS"/>
    <property type="match status" value="1"/>
</dbReference>
<dbReference type="NCBIfam" id="TIGR00556">
    <property type="entry name" value="pantethn_trn"/>
    <property type="match status" value="1"/>
</dbReference>
<dbReference type="Pfam" id="PF01648">
    <property type="entry name" value="ACPS"/>
    <property type="match status" value="1"/>
</dbReference>
<dbReference type="SUPFAM" id="SSF56214">
    <property type="entry name" value="4'-phosphopantetheinyl transferase"/>
    <property type="match status" value="1"/>
</dbReference>
<sequence>MAILGLGTDIVEIARIEAVISRSGERLARRVLSDNEWAIWETHQQPVRFLAKRFAVKEAAAKAFGTGIRNGLAFNQFEVFNDELGKPRLRLWGEALTLAEKLGVAHMHVTLADERHYACATVILES</sequence>
<keyword id="KW-0963">Cytoplasm</keyword>
<keyword id="KW-0275">Fatty acid biosynthesis</keyword>
<keyword id="KW-0276">Fatty acid metabolism</keyword>
<keyword id="KW-0444">Lipid biosynthesis</keyword>
<keyword id="KW-0443">Lipid metabolism</keyword>
<keyword id="KW-0460">Magnesium</keyword>
<keyword id="KW-0479">Metal-binding</keyword>
<keyword id="KW-0808">Transferase</keyword>
<evidence type="ECO:0000255" key="1">
    <source>
        <dbReference type="HAMAP-Rule" id="MF_00101"/>
    </source>
</evidence>
<comment type="function">
    <text evidence="1">Transfers the 4'-phosphopantetheine moiety from coenzyme A to a Ser of acyl-carrier-protein.</text>
</comment>
<comment type="catalytic activity">
    <reaction evidence="1">
        <text>apo-[ACP] + CoA = holo-[ACP] + adenosine 3',5'-bisphosphate + H(+)</text>
        <dbReference type="Rhea" id="RHEA:12068"/>
        <dbReference type="Rhea" id="RHEA-COMP:9685"/>
        <dbReference type="Rhea" id="RHEA-COMP:9690"/>
        <dbReference type="ChEBI" id="CHEBI:15378"/>
        <dbReference type="ChEBI" id="CHEBI:29999"/>
        <dbReference type="ChEBI" id="CHEBI:57287"/>
        <dbReference type="ChEBI" id="CHEBI:58343"/>
        <dbReference type="ChEBI" id="CHEBI:64479"/>
        <dbReference type="EC" id="2.7.8.7"/>
    </reaction>
</comment>
<comment type="cofactor">
    <cofactor evidence="1">
        <name>Mg(2+)</name>
        <dbReference type="ChEBI" id="CHEBI:18420"/>
    </cofactor>
</comment>
<comment type="subcellular location">
    <subcellularLocation>
        <location evidence="1">Cytoplasm</location>
    </subcellularLocation>
</comment>
<comment type="similarity">
    <text evidence="1">Belongs to the P-Pant transferase superfamily. AcpS family.</text>
</comment>
<protein>
    <recommendedName>
        <fullName evidence="1">Holo-[acyl-carrier-protein] synthase</fullName>
        <shortName evidence="1">Holo-ACP synthase</shortName>
        <ecNumber evidence="1">2.7.8.7</ecNumber>
    </recommendedName>
    <alternativeName>
        <fullName evidence="1">4'-phosphopantetheinyl transferase AcpS</fullName>
    </alternativeName>
</protein>
<organism>
    <name type="scientific">Salmonella schwarzengrund (strain CVM19633)</name>
    <dbReference type="NCBI Taxonomy" id="439843"/>
    <lineage>
        <taxon>Bacteria</taxon>
        <taxon>Pseudomonadati</taxon>
        <taxon>Pseudomonadota</taxon>
        <taxon>Gammaproteobacteria</taxon>
        <taxon>Enterobacterales</taxon>
        <taxon>Enterobacteriaceae</taxon>
        <taxon>Salmonella</taxon>
    </lineage>
</organism>
<accession>B4TS10</accession>
<gene>
    <name evidence="1" type="primary">acpS</name>
    <name type="ordered locus">SeSA_A2820</name>
</gene>
<feature type="chain" id="PRO_1000093917" description="Holo-[acyl-carrier-protein] synthase">
    <location>
        <begin position="1"/>
        <end position="126"/>
    </location>
</feature>
<feature type="binding site" evidence="1">
    <location>
        <position position="9"/>
    </location>
    <ligand>
        <name>Mg(2+)</name>
        <dbReference type="ChEBI" id="CHEBI:18420"/>
    </ligand>
</feature>
<feature type="binding site" evidence="1">
    <location>
        <position position="58"/>
    </location>
    <ligand>
        <name>Mg(2+)</name>
        <dbReference type="ChEBI" id="CHEBI:18420"/>
    </ligand>
</feature>
<proteinExistence type="inferred from homology"/>
<reference key="1">
    <citation type="journal article" date="2011" name="J. Bacteriol.">
        <title>Comparative genomics of 28 Salmonella enterica isolates: evidence for CRISPR-mediated adaptive sublineage evolution.</title>
        <authorList>
            <person name="Fricke W.F."/>
            <person name="Mammel M.K."/>
            <person name="McDermott P.F."/>
            <person name="Tartera C."/>
            <person name="White D.G."/>
            <person name="Leclerc J.E."/>
            <person name="Ravel J."/>
            <person name="Cebula T.A."/>
        </authorList>
    </citation>
    <scope>NUCLEOTIDE SEQUENCE [LARGE SCALE GENOMIC DNA]</scope>
    <source>
        <strain>CVM19633</strain>
    </source>
</reference>
<name>ACPS_SALSV</name>